<proteinExistence type="inferred from homology"/>
<gene>
    <name evidence="1" type="primary">atpG</name>
    <name type="ordered locus">BMA2956</name>
</gene>
<organism>
    <name type="scientific">Burkholderia mallei (strain ATCC 23344)</name>
    <dbReference type="NCBI Taxonomy" id="243160"/>
    <lineage>
        <taxon>Bacteria</taxon>
        <taxon>Pseudomonadati</taxon>
        <taxon>Pseudomonadota</taxon>
        <taxon>Betaproteobacteria</taxon>
        <taxon>Burkholderiales</taxon>
        <taxon>Burkholderiaceae</taxon>
        <taxon>Burkholderia</taxon>
        <taxon>pseudomallei group</taxon>
    </lineage>
</organism>
<dbReference type="EMBL" id="CP000010">
    <property type="protein sequence ID" value="AAU48031.1"/>
    <property type="molecule type" value="Genomic_DNA"/>
</dbReference>
<dbReference type="RefSeq" id="WP_004195831.1">
    <property type="nucleotide sequence ID" value="NC_006348.1"/>
</dbReference>
<dbReference type="RefSeq" id="YP_104461.1">
    <property type="nucleotide sequence ID" value="NC_006348.1"/>
</dbReference>
<dbReference type="SMR" id="Q62FR6"/>
<dbReference type="GeneID" id="92980625"/>
<dbReference type="KEGG" id="bma:BMA2956"/>
<dbReference type="PATRIC" id="fig|243160.12.peg.3025"/>
<dbReference type="eggNOG" id="COG0224">
    <property type="taxonomic scope" value="Bacteria"/>
</dbReference>
<dbReference type="HOGENOM" id="CLU_050669_0_1_4"/>
<dbReference type="Proteomes" id="UP000006693">
    <property type="component" value="Chromosome 1"/>
</dbReference>
<dbReference type="GO" id="GO:0005886">
    <property type="term" value="C:plasma membrane"/>
    <property type="evidence" value="ECO:0007669"/>
    <property type="project" value="UniProtKB-SubCell"/>
</dbReference>
<dbReference type="GO" id="GO:0045259">
    <property type="term" value="C:proton-transporting ATP synthase complex"/>
    <property type="evidence" value="ECO:0007669"/>
    <property type="project" value="UniProtKB-KW"/>
</dbReference>
<dbReference type="GO" id="GO:0005524">
    <property type="term" value="F:ATP binding"/>
    <property type="evidence" value="ECO:0007669"/>
    <property type="project" value="UniProtKB-UniRule"/>
</dbReference>
<dbReference type="GO" id="GO:0046933">
    <property type="term" value="F:proton-transporting ATP synthase activity, rotational mechanism"/>
    <property type="evidence" value="ECO:0007669"/>
    <property type="project" value="UniProtKB-UniRule"/>
</dbReference>
<dbReference type="GO" id="GO:0042777">
    <property type="term" value="P:proton motive force-driven plasma membrane ATP synthesis"/>
    <property type="evidence" value="ECO:0007669"/>
    <property type="project" value="UniProtKB-UniRule"/>
</dbReference>
<dbReference type="CDD" id="cd12151">
    <property type="entry name" value="F1-ATPase_gamma"/>
    <property type="match status" value="1"/>
</dbReference>
<dbReference type="FunFam" id="1.10.287.80:FF:000005">
    <property type="entry name" value="ATP synthase gamma chain"/>
    <property type="match status" value="1"/>
</dbReference>
<dbReference type="Gene3D" id="3.40.1380.10">
    <property type="match status" value="1"/>
</dbReference>
<dbReference type="Gene3D" id="1.10.287.80">
    <property type="entry name" value="ATP synthase, gamma subunit, helix hairpin domain"/>
    <property type="match status" value="1"/>
</dbReference>
<dbReference type="HAMAP" id="MF_00815">
    <property type="entry name" value="ATP_synth_gamma_bact"/>
    <property type="match status" value="1"/>
</dbReference>
<dbReference type="InterPro" id="IPR035968">
    <property type="entry name" value="ATP_synth_F1_ATPase_gsu"/>
</dbReference>
<dbReference type="InterPro" id="IPR000131">
    <property type="entry name" value="ATP_synth_F1_gsu"/>
</dbReference>
<dbReference type="InterPro" id="IPR023632">
    <property type="entry name" value="ATP_synth_F1_gsu_CS"/>
</dbReference>
<dbReference type="NCBIfam" id="TIGR01146">
    <property type="entry name" value="ATPsyn_F1gamma"/>
    <property type="match status" value="1"/>
</dbReference>
<dbReference type="NCBIfam" id="NF004144">
    <property type="entry name" value="PRK05621.1-1"/>
    <property type="match status" value="1"/>
</dbReference>
<dbReference type="PANTHER" id="PTHR11693">
    <property type="entry name" value="ATP SYNTHASE GAMMA CHAIN"/>
    <property type="match status" value="1"/>
</dbReference>
<dbReference type="PANTHER" id="PTHR11693:SF22">
    <property type="entry name" value="ATP SYNTHASE SUBUNIT GAMMA, MITOCHONDRIAL"/>
    <property type="match status" value="1"/>
</dbReference>
<dbReference type="Pfam" id="PF00231">
    <property type="entry name" value="ATP-synt"/>
    <property type="match status" value="1"/>
</dbReference>
<dbReference type="PRINTS" id="PR00126">
    <property type="entry name" value="ATPASEGAMMA"/>
</dbReference>
<dbReference type="SUPFAM" id="SSF52943">
    <property type="entry name" value="ATP synthase (F1-ATPase), gamma subunit"/>
    <property type="match status" value="1"/>
</dbReference>
<dbReference type="PROSITE" id="PS00153">
    <property type="entry name" value="ATPASE_GAMMA"/>
    <property type="match status" value="1"/>
</dbReference>
<sequence length="291" mass="31858">MAGMKEIRGKIKSVQNTRKITKAMEMVAASKMRRAQERMRAARPYAEKVRAIAAHMSRANPEYRHPFMVANDGVKTAGMILVTTDKGLCGGLNTNVLRASLQKFKELEEQGQKVEATAIGGKGLGFLNRFGAKVISQVVHLGDTPHLDKLIGAVKTQLDLYSEGKLSAVYLAYTRFVNTMKQETVIEQLLPLSSEHFDANDGTPATSWDYIYEPDAQAVVDELLVRYVEALVYQAVAENMASEQSARMVAMKAASDNAKTVISELQLSYNKSRQAAITKELSEIVGGAAAV</sequence>
<keyword id="KW-0066">ATP synthesis</keyword>
<keyword id="KW-0997">Cell inner membrane</keyword>
<keyword id="KW-1003">Cell membrane</keyword>
<keyword id="KW-0139">CF(1)</keyword>
<keyword id="KW-0375">Hydrogen ion transport</keyword>
<keyword id="KW-0406">Ion transport</keyword>
<keyword id="KW-0472">Membrane</keyword>
<keyword id="KW-1185">Reference proteome</keyword>
<keyword id="KW-0813">Transport</keyword>
<evidence type="ECO:0000255" key="1">
    <source>
        <dbReference type="HAMAP-Rule" id="MF_00815"/>
    </source>
</evidence>
<accession>Q62FR6</accession>
<reference key="1">
    <citation type="journal article" date="2004" name="Proc. Natl. Acad. Sci. U.S.A.">
        <title>Structural flexibility in the Burkholderia mallei genome.</title>
        <authorList>
            <person name="Nierman W.C."/>
            <person name="DeShazer D."/>
            <person name="Kim H.S."/>
            <person name="Tettelin H."/>
            <person name="Nelson K.E."/>
            <person name="Feldblyum T.V."/>
            <person name="Ulrich R.L."/>
            <person name="Ronning C.M."/>
            <person name="Brinkac L.M."/>
            <person name="Daugherty S.C."/>
            <person name="Davidsen T.D."/>
            <person name="DeBoy R.T."/>
            <person name="Dimitrov G."/>
            <person name="Dodson R.J."/>
            <person name="Durkin A.S."/>
            <person name="Gwinn M.L."/>
            <person name="Haft D.H."/>
            <person name="Khouri H.M."/>
            <person name="Kolonay J.F."/>
            <person name="Madupu R."/>
            <person name="Mohammoud Y."/>
            <person name="Nelson W.C."/>
            <person name="Radune D."/>
            <person name="Romero C.M."/>
            <person name="Sarria S."/>
            <person name="Selengut J."/>
            <person name="Shamblin C."/>
            <person name="Sullivan S.A."/>
            <person name="White O."/>
            <person name="Yu Y."/>
            <person name="Zafar N."/>
            <person name="Zhou L."/>
            <person name="Fraser C.M."/>
        </authorList>
    </citation>
    <scope>NUCLEOTIDE SEQUENCE [LARGE SCALE GENOMIC DNA]</scope>
    <source>
        <strain>ATCC 23344</strain>
    </source>
</reference>
<comment type="function">
    <text evidence="1">Produces ATP from ADP in the presence of a proton gradient across the membrane. The gamma chain is believed to be important in regulating ATPase activity and the flow of protons through the CF(0) complex.</text>
</comment>
<comment type="subunit">
    <text evidence="1">F-type ATPases have 2 components, CF(1) - the catalytic core - and CF(0) - the membrane proton channel. CF(1) has five subunits: alpha(3), beta(3), gamma(1), delta(1), epsilon(1). CF(0) has three main subunits: a, b and c.</text>
</comment>
<comment type="subcellular location">
    <subcellularLocation>
        <location evidence="1">Cell inner membrane</location>
        <topology evidence="1">Peripheral membrane protein</topology>
    </subcellularLocation>
</comment>
<comment type="similarity">
    <text evidence="1">Belongs to the ATPase gamma chain family.</text>
</comment>
<protein>
    <recommendedName>
        <fullName evidence="1">ATP synthase gamma chain</fullName>
    </recommendedName>
    <alternativeName>
        <fullName evidence="1">ATP synthase F1 sector gamma subunit</fullName>
    </alternativeName>
    <alternativeName>
        <fullName evidence="1">F-ATPase gamma subunit</fullName>
    </alternativeName>
</protein>
<feature type="chain" id="PRO_0000073258" description="ATP synthase gamma chain">
    <location>
        <begin position="1"/>
        <end position="291"/>
    </location>
</feature>
<name>ATPG_BURMA</name>